<proteinExistence type="inferred from homology"/>
<reference key="1">
    <citation type="submission" date="2008-04" db="EMBL/GenBank/DDBJ databases">
        <title>Complete sequence of chromosome 1 of Burkholderia ambifaria MC40-6.</title>
        <authorList>
            <person name="Copeland A."/>
            <person name="Lucas S."/>
            <person name="Lapidus A."/>
            <person name="Glavina del Rio T."/>
            <person name="Dalin E."/>
            <person name="Tice H."/>
            <person name="Pitluck S."/>
            <person name="Chain P."/>
            <person name="Malfatti S."/>
            <person name="Shin M."/>
            <person name="Vergez L."/>
            <person name="Lang D."/>
            <person name="Schmutz J."/>
            <person name="Larimer F."/>
            <person name="Land M."/>
            <person name="Hauser L."/>
            <person name="Kyrpides N."/>
            <person name="Lykidis A."/>
            <person name="Ramette A."/>
            <person name="Konstantinidis K."/>
            <person name="Tiedje J."/>
            <person name="Richardson P."/>
        </authorList>
    </citation>
    <scope>NUCLEOTIDE SEQUENCE [LARGE SCALE GENOMIC DNA]</scope>
    <source>
        <strain>MC40-6</strain>
    </source>
</reference>
<dbReference type="EC" id="2.5.1.78" evidence="1"/>
<dbReference type="EMBL" id="CP001025">
    <property type="protein sequence ID" value="ACB63319.1"/>
    <property type="molecule type" value="Genomic_DNA"/>
</dbReference>
<dbReference type="RefSeq" id="WP_012363272.1">
    <property type="nucleotide sequence ID" value="NC_010551.1"/>
</dbReference>
<dbReference type="SMR" id="B1YUJ2"/>
<dbReference type="KEGG" id="bac:BamMC406_0826"/>
<dbReference type="HOGENOM" id="CLU_089358_1_2_4"/>
<dbReference type="OrthoDB" id="9809709at2"/>
<dbReference type="UniPathway" id="UPA00275">
    <property type="reaction ID" value="UER00404"/>
</dbReference>
<dbReference type="Proteomes" id="UP000001680">
    <property type="component" value="Chromosome 1"/>
</dbReference>
<dbReference type="GO" id="GO:0005829">
    <property type="term" value="C:cytosol"/>
    <property type="evidence" value="ECO:0007669"/>
    <property type="project" value="TreeGrafter"/>
</dbReference>
<dbReference type="GO" id="GO:0009349">
    <property type="term" value="C:riboflavin synthase complex"/>
    <property type="evidence" value="ECO:0007669"/>
    <property type="project" value="InterPro"/>
</dbReference>
<dbReference type="GO" id="GO:0000906">
    <property type="term" value="F:6,7-dimethyl-8-ribityllumazine synthase activity"/>
    <property type="evidence" value="ECO:0007669"/>
    <property type="project" value="UniProtKB-UniRule"/>
</dbReference>
<dbReference type="GO" id="GO:0009231">
    <property type="term" value="P:riboflavin biosynthetic process"/>
    <property type="evidence" value="ECO:0007669"/>
    <property type="project" value="UniProtKB-UniRule"/>
</dbReference>
<dbReference type="CDD" id="cd09209">
    <property type="entry name" value="Lumazine_synthase-I"/>
    <property type="match status" value="1"/>
</dbReference>
<dbReference type="Gene3D" id="3.40.50.960">
    <property type="entry name" value="Lumazine/riboflavin synthase"/>
    <property type="match status" value="1"/>
</dbReference>
<dbReference type="HAMAP" id="MF_00178">
    <property type="entry name" value="Lumazine_synth"/>
    <property type="match status" value="1"/>
</dbReference>
<dbReference type="InterPro" id="IPR034964">
    <property type="entry name" value="LS"/>
</dbReference>
<dbReference type="InterPro" id="IPR002180">
    <property type="entry name" value="LS/RS"/>
</dbReference>
<dbReference type="InterPro" id="IPR036467">
    <property type="entry name" value="LS/RS_sf"/>
</dbReference>
<dbReference type="NCBIfam" id="TIGR00114">
    <property type="entry name" value="lumazine-synth"/>
    <property type="match status" value="1"/>
</dbReference>
<dbReference type="PANTHER" id="PTHR21058:SF0">
    <property type="entry name" value="6,7-DIMETHYL-8-RIBITYLLUMAZINE SYNTHASE"/>
    <property type="match status" value="1"/>
</dbReference>
<dbReference type="PANTHER" id="PTHR21058">
    <property type="entry name" value="6,7-DIMETHYL-8-RIBITYLLUMAZINE SYNTHASE DMRL SYNTHASE LUMAZINE SYNTHASE"/>
    <property type="match status" value="1"/>
</dbReference>
<dbReference type="Pfam" id="PF00885">
    <property type="entry name" value="DMRL_synthase"/>
    <property type="match status" value="1"/>
</dbReference>
<dbReference type="SUPFAM" id="SSF52121">
    <property type="entry name" value="Lumazine synthase"/>
    <property type="match status" value="1"/>
</dbReference>
<organism>
    <name type="scientific">Burkholderia ambifaria (strain MC40-6)</name>
    <dbReference type="NCBI Taxonomy" id="398577"/>
    <lineage>
        <taxon>Bacteria</taxon>
        <taxon>Pseudomonadati</taxon>
        <taxon>Pseudomonadota</taxon>
        <taxon>Betaproteobacteria</taxon>
        <taxon>Burkholderiales</taxon>
        <taxon>Burkholderiaceae</taxon>
        <taxon>Burkholderia</taxon>
        <taxon>Burkholderia cepacia complex</taxon>
    </lineage>
</organism>
<keyword id="KW-0686">Riboflavin biosynthesis</keyword>
<keyword id="KW-0808">Transferase</keyword>
<sequence length="171" mass="18444">MEIGQYQPNLEGDGLRIGIVQSRFNEPVCNGLADACVEELERLGVSGEDVLLVSVPGALEIPLALQKLAESGQFDALIALGAVIRGETYHFELVSNESGAGITRIGLDFNLPIANAVLTTENDKQAVARMTEKGRDAARVAVEMANLTMALDQLGDDEDEEEDEEDEEERA</sequence>
<comment type="function">
    <text evidence="1">Catalyzes the formation of 6,7-dimethyl-8-ribityllumazine by condensation of 5-amino-6-(D-ribitylamino)uracil with 3,4-dihydroxy-2-butanone 4-phosphate. This is the penultimate step in the biosynthesis of riboflavin.</text>
</comment>
<comment type="catalytic activity">
    <reaction evidence="1">
        <text>(2S)-2-hydroxy-3-oxobutyl phosphate + 5-amino-6-(D-ribitylamino)uracil = 6,7-dimethyl-8-(1-D-ribityl)lumazine + phosphate + 2 H2O + H(+)</text>
        <dbReference type="Rhea" id="RHEA:26152"/>
        <dbReference type="ChEBI" id="CHEBI:15377"/>
        <dbReference type="ChEBI" id="CHEBI:15378"/>
        <dbReference type="ChEBI" id="CHEBI:15934"/>
        <dbReference type="ChEBI" id="CHEBI:43474"/>
        <dbReference type="ChEBI" id="CHEBI:58201"/>
        <dbReference type="ChEBI" id="CHEBI:58830"/>
        <dbReference type="EC" id="2.5.1.78"/>
    </reaction>
</comment>
<comment type="pathway">
    <text evidence="1">Cofactor biosynthesis; riboflavin biosynthesis; riboflavin from 2-hydroxy-3-oxobutyl phosphate and 5-amino-6-(D-ribitylamino)uracil: step 1/2.</text>
</comment>
<comment type="similarity">
    <text evidence="1">Belongs to the DMRL synthase family.</text>
</comment>
<evidence type="ECO:0000255" key="1">
    <source>
        <dbReference type="HAMAP-Rule" id="MF_00178"/>
    </source>
</evidence>
<evidence type="ECO:0000256" key="2">
    <source>
        <dbReference type="SAM" id="MobiDB-lite"/>
    </source>
</evidence>
<protein>
    <recommendedName>
        <fullName evidence="1">6,7-dimethyl-8-ribityllumazine synthase</fullName>
        <shortName evidence="1">DMRL synthase</shortName>
        <shortName evidence="1">LS</shortName>
        <shortName evidence="1">Lumazine synthase</shortName>
        <ecNumber evidence="1">2.5.1.78</ecNumber>
    </recommendedName>
</protein>
<name>RISB_BURA4</name>
<feature type="chain" id="PRO_1000098164" description="6,7-dimethyl-8-ribityllumazine synthase">
    <location>
        <begin position="1"/>
        <end position="171"/>
    </location>
</feature>
<feature type="region of interest" description="Disordered" evidence="2">
    <location>
        <begin position="150"/>
        <end position="171"/>
    </location>
</feature>
<feature type="compositionally biased region" description="Acidic residues" evidence="2">
    <location>
        <begin position="154"/>
        <end position="171"/>
    </location>
</feature>
<feature type="active site" description="Proton donor" evidence="1">
    <location>
        <position position="90"/>
    </location>
</feature>
<feature type="binding site" evidence="1">
    <location>
        <position position="24"/>
    </location>
    <ligand>
        <name>5-amino-6-(D-ribitylamino)uracil</name>
        <dbReference type="ChEBI" id="CHEBI:15934"/>
    </ligand>
</feature>
<feature type="binding site" evidence="1">
    <location>
        <begin position="58"/>
        <end position="60"/>
    </location>
    <ligand>
        <name>5-amino-6-(D-ribitylamino)uracil</name>
        <dbReference type="ChEBI" id="CHEBI:15934"/>
    </ligand>
</feature>
<feature type="binding site" evidence="1">
    <location>
        <begin position="82"/>
        <end position="84"/>
    </location>
    <ligand>
        <name>5-amino-6-(D-ribitylamino)uracil</name>
        <dbReference type="ChEBI" id="CHEBI:15934"/>
    </ligand>
</feature>
<feature type="binding site" evidence="1">
    <location>
        <begin position="87"/>
        <end position="88"/>
    </location>
    <ligand>
        <name>(2S)-2-hydroxy-3-oxobutyl phosphate</name>
        <dbReference type="ChEBI" id="CHEBI:58830"/>
    </ligand>
</feature>
<feature type="binding site" evidence="1">
    <location>
        <position position="115"/>
    </location>
    <ligand>
        <name>5-amino-6-(D-ribitylamino)uracil</name>
        <dbReference type="ChEBI" id="CHEBI:15934"/>
    </ligand>
</feature>
<feature type="binding site" evidence="1">
    <location>
        <position position="129"/>
    </location>
    <ligand>
        <name>(2S)-2-hydroxy-3-oxobutyl phosphate</name>
        <dbReference type="ChEBI" id="CHEBI:58830"/>
    </ligand>
</feature>
<gene>
    <name evidence="1" type="primary">ribH</name>
    <name type="ordered locus">BamMC406_0826</name>
</gene>
<accession>B1YUJ2</accession>